<accession>Q7WHE9</accession>
<sequence length="209" mass="22776">MKRLWDISPPVSADSPVFPGDTPYRQQWKWSLTPDCPVNVSEITLSPHIGAHADAPLHYENGAAAIGAVALEPFLGPCRVIHAIGCGPLILPEHLAHAQAGLPPRVLVRTARHAALQWWVDDFSAYAPQTIEWLAGRGVTLIGIDTPSIDPASSKTLDSHHAIRRHDMRVLENLRLDDVDEGDYELIALPLALVQADASPVRAVLRELA</sequence>
<comment type="function">
    <text evidence="1">Catalyzes the hydrolysis of N-formyl-L-kynurenine to L-kynurenine, the second step in the kynurenine pathway of tryptophan degradation.</text>
</comment>
<comment type="catalytic activity">
    <reaction evidence="1">
        <text>N-formyl-L-kynurenine + H2O = L-kynurenine + formate + H(+)</text>
        <dbReference type="Rhea" id="RHEA:13009"/>
        <dbReference type="ChEBI" id="CHEBI:15377"/>
        <dbReference type="ChEBI" id="CHEBI:15378"/>
        <dbReference type="ChEBI" id="CHEBI:15740"/>
        <dbReference type="ChEBI" id="CHEBI:57959"/>
        <dbReference type="ChEBI" id="CHEBI:58629"/>
        <dbReference type="EC" id="3.5.1.9"/>
    </reaction>
</comment>
<comment type="cofactor">
    <cofactor evidence="1">
        <name>Zn(2+)</name>
        <dbReference type="ChEBI" id="CHEBI:29105"/>
    </cofactor>
    <text evidence="1">Binds 2 zinc ions per subunit.</text>
</comment>
<comment type="pathway">
    <text evidence="1">Amino-acid degradation; L-tryptophan degradation via kynurenine pathway; L-kynurenine from L-tryptophan: step 2/2.</text>
</comment>
<comment type="subunit">
    <text evidence="1">Homodimer.</text>
</comment>
<comment type="similarity">
    <text evidence="1">Belongs to the Cyclase 1 superfamily. KynB family.</text>
</comment>
<feature type="chain" id="PRO_0000362096" description="Kynurenine formamidase">
    <location>
        <begin position="1"/>
        <end position="209"/>
    </location>
</feature>
<feature type="active site" description="Proton donor/acceptor" evidence="1">
    <location>
        <position position="58"/>
    </location>
</feature>
<feature type="binding site" evidence="1">
    <location>
        <position position="18"/>
    </location>
    <ligand>
        <name>substrate</name>
    </ligand>
</feature>
<feature type="binding site" evidence="1">
    <location>
        <position position="48"/>
    </location>
    <ligand>
        <name>Zn(2+)</name>
        <dbReference type="ChEBI" id="CHEBI:29105"/>
        <label>1</label>
    </ligand>
</feature>
<feature type="binding site" evidence="1">
    <location>
        <position position="52"/>
    </location>
    <ligand>
        <name>Zn(2+)</name>
        <dbReference type="ChEBI" id="CHEBI:29105"/>
        <label>1</label>
    </ligand>
</feature>
<feature type="binding site" evidence="1">
    <location>
        <position position="54"/>
    </location>
    <ligand>
        <name>Zn(2+)</name>
        <dbReference type="ChEBI" id="CHEBI:29105"/>
        <label>1</label>
    </ligand>
</feature>
<feature type="binding site" evidence="1">
    <location>
        <position position="54"/>
    </location>
    <ligand>
        <name>Zn(2+)</name>
        <dbReference type="ChEBI" id="CHEBI:29105"/>
        <label>2</label>
    </ligand>
</feature>
<feature type="binding site" evidence="1">
    <location>
        <position position="160"/>
    </location>
    <ligand>
        <name>Zn(2+)</name>
        <dbReference type="ChEBI" id="CHEBI:29105"/>
        <label>2</label>
    </ligand>
</feature>
<feature type="binding site" evidence="1">
    <location>
        <position position="172"/>
    </location>
    <ligand>
        <name>Zn(2+)</name>
        <dbReference type="ChEBI" id="CHEBI:29105"/>
        <label>1</label>
    </ligand>
</feature>
<feature type="binding site" evidence="1">
    <location>
        <position position="172"/>
    </location>
    <ligand>
        <name>Zn(2+)</name>
        <dbReference type="ChEBI" id="CHEBI:29105"/>
        <label>2</label>
    </ligand>
</feature>
<evidence type="ECO:0000255" key="1">
    <source>
        <dbReference type="HAMAP-Rule" id="MF_01969"/>
    </source>
</evidence>
<reference key="1">
    <citation type="journal article" date="2003" name="Nat. Genet.">
        <title>Comparative analysis of the genome sequences of Bordetella pertussis, Bordetella parapertussis and Bordetella bronchiseptica.</title>
        <authorList>
            <person name="Parkhill J."/>
            <person name="Sebaihia M."/>
            <person name="Preston A."/>
            <person name="Murphy L.D."/>
            <person name="Thomson N.R."/>
            <person name="Harris D.E."/>
            <person name="Holden M.T.G."/>
            <person name="Churcher C.M."/>
            <person name="Bentley S.D."/>
            <person name="Mungall K.L."/>
            <person name="Cerdeno-Tarraga A.-M."/>
            <person name="Temple L."/>
            <person name="James K.D."/>
            <person name="Harris B."/>
            <person name="Quail M.A."/>
            <person name="Achtman M."/>
            <person name="Atkin R."/>
            <person name="Baker S."/>
            <person name="Basham D."/>
            <person name="Bason N."/>
            <person name="Cherevach I."/>
            <person name="Chillingworth T."/>
            <person name="Collins M."/>
            <person name="Cronin A."/>
            <person name="Davis P."/>
            <person name="Doggett J."/>
            <person name="Feltwell T."/>
            <person name="Goble A."/>
            <person name="Hamlin N."/>
            <person name="Hauser H."/>
            <person name="Holroyd S."/>
            <person name="Jagels K."/>
            <person name="Leather S."/>
            <person name="Moule S."/>
            <person name="Norberczak H."/>
            <person name="O'Neil S."/>
            <person name="Ormond D."/>
            <person name="Price C."/>
            <person name="Rabbinowitsch E."/>
            <person name="Rutter S."/>
            <person name="Sanders M."/>
            <person name="Saunders D."/>
            <person name="Seeger K."/>
            <person name="Sharp S."/>
            <person name="Simmonds M."/>
            <person name="Skelton J."/>
            <person name="Squares R."/>
            <person name="Squares S."/>
            <person name="Stevens K."/>
            <person name="Unwin L."/>
            <person name="Whitehead S."/>
            <person name="Barrell B.G."/>
            <person name="Maskell D.J."/>
        </authorList>
    </citation>
    <scope>NUCLEOTIDE SEQUENCE [LARGE SCALE GENOMIC DNA]</scope>
    <source>
        <strain>ATCC BAA-588 / NCTC 13252 / RB50</strain>
    </source>
</reference>
<protein>
    <recommendedName>
        <fullName evidence="1">Kynurenine formamidase</fullName>
        <shortName evidence="1">KFA</shortName>
        <shortName evidence="1">KFase</shortName>
        <ecNumber evidence="1">3.5.1.9</ecNumber>
    </recommendedName>
    <alternativeName>
        <fullName evidence="1">Arylformamidase</fullName>
    </alternativeName>
    <alternativeName>
        <fullName evidence="1">N-formylkynurenine formamidase</fullName>
        <shortName evidence="1">FKF</shortName>
    </alternativeName>
</protein>
<name>KYNB_BORBR</name>
<keyword id="KW-0378">Hydrolase</keyword>
<keyword id="KW-0479">Metal-binding</keyword>
<keyword id="KW-0823">Tryptophan catabolism</keyword>
<keyword id="KW-0862">Zinc</keyword>
<dbReference type="EC" id="3.5.1.9" evidence="1"/>
<dbReference type="EMBL" id="BX640447">
    <property type="protein sequence ID" value="CAE33751.1"/>
    <property type="molecule type" value="Genomic_DNA"/>
</dbReference>
<dbReference type="RefSeq" id="WP_003810518.1">
    <property type="nucleotide sequence ID" value="NC_002927.3"/>
</dbReference>
<dbReference type="SMR" id="Q7WHE9"/>
<dbReference type="GeneID" id="69601148"/>
<dbReference type="KEGG" id="bbr:BB3259"/>
<dbReference type="eggNOG" id="COG1878">
    <property type="taxonomic scope" value="Bacteria"/>
</dbReference>
<dbReference type="HOGENOM" id="CLU_030671_3_1_4"/>
<dbReference type="UniPathway" id="UPA00333">
    <property type="reaction ID" value="UER00454"/>
</dbReference>
<dbReference type="Proteomes" id="UP000001027">
    <property type="component" value="Chromosome"/>
</dbReference>
<dbReference type="GO" id="GO:0004061">
    <property type="term" value="F:arylformamidase activity"/>
    <property type="evidence" value="ECO:0000250"/>
    <property type="project" value="UniProtKB"/>
</dbReference>
<dbReference type="GO" id="GO:0004328">
    <property type="term" value="F:formamidase activity"/>
    <property type="evidence" value="ECO:0007669"/>
    <property type="project" value="InterPro"/>
</dbReference>
<dbReference type="GO" id="GO:0008270">
    <property type="term" value="F:zinc ion binding"/>
    <property type="evidence" value="ECO:0007669"/>
    <property type="project" value="UniProtKB-UniRule"/>
</dbReference>
<dbReference type="GO" id="GO:0043420">
    <property type="term" value="P:anthranilate metabolic process"/>
    <property type="evidence" value="ECO:0000250"/>
    <property type="project" value="UniProtKB"/>
</dbReference>
<dbReference type="GO" id="GO:0019441">
    <property type="term" value="P:L-tryptophan catabolic process to kynurenine"/>
    <property type="evidence" value="ECO:0000250"/>
    <property type="project" value="UniProtKB"/>
</dbReference>
<dbReference type="FunFam" id="3.50.30.50:FF:000001">
    <property type="entry name" value="Kynurenine formamidase"/>
    <property type="match status" value="1"/>
</dbReference>
<dbReference type="Gene3D" id="3.50.30.50">
    <property type="entry name" value="Putative cyclase"/>
    <property type="match status" value="1"/>
</dbReference>
<dbReference type="HAMAP" id="MF_01969">
    <property type="entry name" value="KynB"/>
    <property type="match status" value="1"/>
</dbReference>
<dbReference type="InterPro" id="IPR007325">
    <property type="entry name" value="KFase/CYL"/>
</dbReference>
<dbReference type="InterPro" id="IPR037175">
    <property type="entry name" value="KFase_sf"/>
</dbReference>
<dbReference type="InterPro" id="IPR017484">
    <property type="entry name" value="Kynurenine_formamidase_bac"/>
</dbReference>
<dbReference type="NCBIfam" id="TIGR03035">
    <property type="entry name" value="trp_arylform"/>
    <property type="match status" value="1"/>
</dbReference>
<dbReference type="PANTHER" id="PTHR31118">
    <property type="entry name" value="CYCLASE-LIKE PROTEIN 2"/>
    <property type="match status" value="1"/>
</dbReference>
<dbReference type="PANTHER" id="PTHR31118:SF32">
    <property type="entry name" value="KYNURENINE FORMAMIDASE"/>
    <property type="match status" value="1"/>
</dbReference>
<dbReference type="Pfam" id="PF04199">
    <property type="entry name" value="Cyclase"/>
    <property type="match status" value="1"/>
</dbReference>
<dbReference type="SUPFAM" id="SSF102198">
    <property type="entry name" value="Putative cyclase"/>
    <property type="match status" value="1"/>
</dbReference>
<gene>
    <name evidence="1" type="primary">kynB</name>
    <name type="ordered locus">BB3259</name>
</gene>
<proteinExistence type="inferred from homology"/>
<organism>
    <name type="scientific">Bordetella bronchiseptica (strain ATCC BAA-588 / NCTC 13252 / RB50)</name>
    <name type="common">Alcaligenes bronchisepticus</name>
    <dbReference type="NCBI Taxonomy" id="257310"/>
    <lineage>
        <taxon>Bacteria</taxon>
        <taxon>Pseudomonadati</taxon>
        <taxon>Pseudomonadota</taxon>
        <taxon>Betaproteobacteria</taxon>
        <taxon>Burkholderiales</taxon>
        <taxon>Alcaligenaceae</taxon>
        <taxon>Bordetella</taxon>
    </lineage>
</organism>